<proteinExistence type="inferred from homology"/>
<keyword id="KW-0028">Amino-acid biosynthesis</keyword>
<keyword id="KW-0057">Aromatic amino acid biosynthesis</keyword>
<keyword id="KW-0963">Cytoplasm</keyword>
<keyword id="KW-0808">Transferase</keyword>
<comment type="function">
    <text evidence="1">Catalyzes the transfer of the enolpyruvyl moiety of phosphoenolpyruvate (PEP) to the 5-hydroxyl of shikimate-3-phosphate (S3P) to produce enolpyruvyl shikimate-3-phosphate and inorganic phosphate.</text>
</comment>
<comment type="catalytic activity">
    <reaction evidence="1">
        <text>3-phosphoshikimate + phosphoenolpyruvate = 5-O-(1-carboxyvinyl)-3-phosphoshikimate + phosphate</text>
        <dbReference type="Rhea" id="RHEA:21256"/>
        <dbReference type="ChEBI" id="CHEBI:43474"/>
        <dbReference type="ChEBI" id="CHEBI:57701"/>
        <dbReference type="ChEBI" id="CHEBI:58702"/>
        <dbReference type="ChEBI" id="CHEBI:145989"/>
        <dbReference type="EC" id="2.5.1.19"/>
    </reaction>
    <physiologicalReaction direction="left-to-right" evidence="1">
        <dbReference type="Rhea" id="RHEA:21257"/>
    </physiologicalReaction>
</comment>
<comment type="pathway">
    <text evidence="1">Metabolic intermediate biosynthesis; chorismate biosynthesis; chorismate from D-erythrose 4-phosphate and phosphoenolpyruvate: step 6/7.</text>
</comment>
<comment type="subunit">
    <text evidence="1">Monomer.</text>
</comment>
<comment type="subcellular location">
    <subcellularLocation>
        <location evidence="1">Cytoplasm</location>
    </subcellularLocation>
</comment>
<comment type="similarity">
    <text evidence="1">Belongs to the EPSP synthase family.</text>
</comment>
<evidence type="ECO:0000255" key="1">
    <source>
        <dbReference type="HAMAP-Rule" id="MF_00210"/>
    </source>
</evidence>
<dbReference type="EC" id="2.5.1.19" evidence="1"/>
<dbReference type="EMBL" id="CP001072">
    <property type="protein sequence ID" value="ACD48491.1"/>
    <property type="molecule type" value="Genomic_DNA"/>
</dbReference>
<dbReference type="RefSeq" id="WP_000570934.1">
    <property type="nucleotide sequence ID" value="NC_010698.2"/>
</dbReference>
<dbReference type="SMR" id="B2UUF9"/>
<dbReference type="KEGG" id="hps:HPSH_05400"/>
<dbReference type="HOGENOM" id="CLU_024321_0_1_7"/>
<dbReference type="UniPathway" id="UPA00053">
    <property type="reaction ID" value="UER00089"/>
</dbReference>
<dbReference type="GO" id="GO:0005737">
    <property type="term" value="C:cytoplasm"/>
    <property type="evidence" value="ECO:0007669"/>
    <property type="project" value="UniProtKB-SubCell"/>
</dbReference>
<dbReference type="GO" id="GO:0003866">
    <property type="term" value="F:3-phosphoshikimate 1-carboxyvinyltransferase activity"/>
    <property type="evidence" value="ECO:0007669"/>
    <property type="project" value="UniProtKB-UniRule"/>
</dbReference>
<dbReference type="GO" id="GO:0008652">
    <property type="term" value="P:amino acid biosynthetic process"/>
    <property type="evidence" value="ECO:0007669"/>
    <property type="project" value="UniProtKB-KW"/>
</dbReference>
<dbReference type="GO" id="GO:0009073">
    <property type="term" value="P:aromatic amino acid family biosynthetic process"/>
    <property type="evidence" value="ECO:0007669"/>
    <property type="project" value="UniProtKB-KW"/>
</dbReference>
<dbReference type="GO" id="GO:0009423">
    <property type="term" value="P:chorismate biosynthetic process"/>
    <property type="evidence" value="ECO:0007669"/>
    <property type="project" value="UniProtKB-UniRule"/>
</dbReference>
<dbReference type="CDD" id="cd01556">
    <property type="entry name" value="EPSP_synthase"/>
    <property type="match status" value="1"/>
</dbReference>
<dbReference type="FunFam" id="3.65.10.10:FF:000005">
    <property type="entry name" value="3-phosphoshikimate 1-carboxyvinyltransferase"/>
    <property type="match status" value="1"/>
</dbReference>
<dbReference type="Gene3D" id="3.65.10.10">
    <property type="entry name" value="Enolpyruvate transferase domain"/>
    <property type="match status" value="2"/>
</dbReference>
<dbReference type="HAMAP" id="MF_00210">
    <property type="entry name" value="EPSP_synth"/>
    <property type="match status" value="1"/>
</dbReference>
<dbReference type="InterPro" id="IPR001986">
    <property type="entry name" value="Enolpyruvate_Tfrase_dom"/>
</dbReference>
<dbReference type="InterPro" id="IPR036968">
    <property type="entry name" value="Enolpyruvate_Tfrase_sf"/>
</dbReference>
<dbReference type="InterPro" id="IPR006264">
    <property type="entry name" value="EPSP_synthase"/>
</dbReference>
<dbReference type="InterPro" id="IPR023193">
    <property type="entry name" value="EPSP_synthase_CS"/>
</dbReference>
<dbReference type="InterPro" id="IPR013792">
    <property type="entry name" value="RNA3'P_cycl/enolpyr_Trfase_a/b"/>
</dbReference>
<dbReference type="NCBIfam" id="TIGR01356">
    <property type="entry name" value="aroA"/>
    <property type="match status" value="1"/>
</dbReference>
<dbReference type="PANTHER" id="PTHR21090">
    <property type="entry name" value="AROM/DEHYDROQUINATE SYNTHASE"/>
    <property type="match status" value="1"/>
</dbReference>
<dbReference type="PANTHER" id="PTHR21090:SF5">
    <property type="entry name" value="PENTAFUNCTIONAL AROM POLYPEPTIDE"/>
    <property type="match status" value="1"/>
</dbReference>
<dbReference type="Pfam" id="PF00275">
    <property type="entry name" value="EPSP_synthase"/>
    <property type="match status" value="1"/>
</dbReference>
<dbReference type="PIRSF" id="PIRSF000505">
    <property type="entry name" value="EPSPS"/>
    <property type="match status" value="1"/>
</dbReference>
<dbReference type="SUPFAM" id="SSF55205">
    <property type="entry name" value="EPT/RTPC-like"/>
    <property type="match status" value="1"/>
</dbReference>
<dbReference type="PROSITE" id="PS00104">
    <property type="entry name" value="EPSP_SYNTHASE_1"/>
    <property type="match status" value="1"/>
</dbReference>
<dbReference type="PROSITE" id="PS00885">
    <property type="entry name" value="EPSP_SYNTHASE_2"/>
    <property type="match status" value="1"/>
</dbReference>
<gene>
    <name evidence="1" type="primary">aroA</name>
    <name type="ordered locus">HPSH_05400</name>
</gene>
<sequence length="429" mass="47270">MIELDINASDKSLSHRAVIFSLLAQKPCVVRNFLMGEDCLSSLEIAQNLGAKVENIAKNSFKITPPTALKEPNKILNCNNSGTSMRLYSGLLSAQKGLFVLSGDNSLNARPMKRIIEPLKAFGAKILGREDNHFAPLAILGSPLKACDYESPIASAQVKSAFILSALQAQGSSTYKENELSRNHTEIMLKSLGANIQNQNGVLTILPLEKPLEAFDFTIANDPSSAFFFALSCAITPKSRLLLKNVLLNPTRIEAFEALKKMGASIEYAIQSKDLEMIGDIYIEHAPLKAISIEQNIASLIDEIPALSIAMLFAKGKSMVKNAKDLRSKESDRIKAVVSNFKALGIECEEFEDGFCIEGLEDISQLKQRFSQKKPPLIQSFNDHRIAMSFAILTLALPLEIDNLECANISFPQFKRLLNLFKKRSFNGN</sequence>
<feature type="chain" id="PRO_1000099707" description="3-phosphoshikimate 1-carboxyvinyltransferase">
    <location>
        <begin position="1"/>
        <end position="429"/>
    </location>
</feature>
<feature type="active site" description="Proton acceptor" evidence="1">
    <location>
        <position position="302"/>
    </location>
</feature>
<feature type="binding site" evidence="1">
    <location>
        <position position="11"/>
    </location>
    <ligand>
        <name>3-phosphoshikimate</name>
        <dbReference type="ChEBI" id="CHEBI:145989"/>
    </ligand>
</feature>
<feature type="binding site" evidence="1">
    <location>
        <position position="11"/>
    </location>
    <ligand>
        <name>phosphoenolpyruvate</name>
        <dbReference type="ChEBI" id="CHEBI:58702"/>
    </ligand>
</feature>
<feature type="binding site" evidence="1">
    <location>
        <position position="12"/>
    </location>
    <ligand>
        <name>3-phosphoshikimate</name>
        <dbReference type="ChEBI" id="CHEBI:145989"/>
    </ligand>
</feature>
<feature type="binding site" evidence="1">
    <location>
        <position position="16"/>
    </location>
    <ligand>
        <name>3-phosphoshikimate</name>
        <dbReference type="ChEBI" id="CHEBI:145989"/>
    </ligand>
</feature>
<feature type="binding site" evidence="1">
    <location>
        <position position="82"/>
    </location>
    <ligand>
        <name>phosphoenolpyruvate</name>
        <dbReference type="ChEBI" id="CHEBI:58702"/>
    </ligand>
</feature>
<feature type="binding site" evidence="1">
    <location>
        <position position="110"/>
    </location>
    <ligand>
        <name>phosphoenolpyruvate</name>
        <dbReference type="ChEBI" id="CHEBI:58702"/>
    </ligand>
</feature>
<feature type="binding site" evidence="1">
    <location>
        <position position="155"/>
    </location>
    <ligand>
        <name>3-phosphoshikimate</name>
        <dbReference type="ChEBI" id="CHEBI:145989"/>
    </ligand>
</feature>
<feature type="binding site" evidence="1">
    <location>
        <position position="157"/>
    </location>
    <ligand>
        <name>3-phosphoshikimate</name>
        <dbReference type="ChEBI" id="CHEBI:145989"/>
    </ligand>
</feature>
<feature type="binding site" evidence="1">
    <location>
        <position position="157"/>
    </location>
    <ligand>
        <name>phosphoenolpyruvate</name>
        <dbReference type="ChEBI" id="CHEBI:58702"/>
    </ligand>
</feature>
<feature type="binding site" evidence="1">
    <location>
        <position position="302"/>
    </location>
    <ligand>
        <name>3-phosphoshikimate</name>
        <dbReference type="ChEBI" id="CHEBI:145989"/>
    </ligand>
</feature>
<feature type="binding site" evidence="1">
    <location>
        <position position="329"/>
    </location>
    <ligand>
        <name>3-phosphoshikimate</name>
        <dbReference type="ChEBI" id="CHEBI:145989"/>
    </ligand>
</feature>
<feature type="binding site" evidence="1">
    <location>
        <position position="333"/>
    </location>
    <ligand>
        <name>phosphoenolpyruvate</name>
        <dbReference type="ChEBI" id="CHEBI:58702"/>
    </ligand>
</feature>
<feature type="binding site" evidence="1">
    <location>
        <position position="385"/>
    </location>
    <ligand>
        <name>phosphoenolpyruvate</name>
        <dbReference type="ChEBI" id="CHEBI:58702"/>
    </ligand>
</feature>
<reference key="1">
    <citation type="submission" date="2008-05" db="EMBL/GenBank/DDBJ databases">
        <title>Genome sequence of Helicobacter pylori from the remote Amazon: traces of Asian ancestry of the first Americans.</title>
        <authorList>
            <person name="Kersulyte D."/>
            <person name="Kalia A."/>
            <person name="Gilman R.H."/>
            <person name="Berg D.E."/>
        </authorList>
    </citation>
    <scope>NUCLEOTIDE SEQUENCE [LARGE SCALE GENOMIC DNA]</scope>
    <source>
        <strain>Shi470</strain>
    </source>
</reference>
<organism>
    <name type="scientific">Helicobacter pylori (strain Shi470)</name>
    <dbReference type="NCBI Taxonomy" id="512562"/>
    <lineage>
        <taxon>Bacteria</taxon>
        <taxon>Pseudomonadati</taxon>
        <taxon>Campylobacterota</taxon>
        <taxon>Epsilonproteobacteria</taxon>
        <taxon>Campylobacterales</taxon>
        <taxon>Helicobacteraceae</taxon>
        <taxon>Helicobacter</taxon>
    </lineage>
</organism>
<name>AROA_HELPS</name>
<accession>B2UUF9</accession>
<protein>
    <recommendedName>
        <fullName evidence="1">3-phosphoshikimate 1-carboxyvinyltransferase</fullName>
        <ecNumber evidence="1">2.5.1.19</ecNumber>
    </recommendedName>
    <alternativeName>
        <fullName evidence="1">5-enolpyruvylshikimate-3-phosphate synthase</fullName>
        <shortName evidence="1">EPSP synthase</shortName>
        <shortName evidence="1">EPSPS</shortName>
    </alternativeName>
</protein>